<reference key="1">
    <citation type="journal article" date="2005" name="J. Bacteriol.">
        <title>Insights on evolution of virulence and resistance from the complete genome analysis of an early methicillin-resistant Staphylococcus aureus strain and a biofilm-producing methicillin-resistant Staphylococcus epidermidis strain.</title>
        <authorList>
            <person name="Gill S.R."/>
            <person name="Fouts D.E."/>
            <person name="Archer G.L."/>
            <person name="Mongodin E.F."/>
            <person name="DeBoy R.T."/>
            <person name="Ravel J."/>
            <person name="Paulsen I.T."/>
            <person name="Kolonay J.F."/>
            <person name="Brinkac L.M."/>
            <person name="Beanan M.J."/>
            <person name="Dodson R.J."/>
            <person name="Daugherty S.C."/>
            <person name="Madupu R."/>
            <person name="Angiuoli S.V."/>
            <person name="Durkin A.S."/>
            <person name="Haft D.H."/>
            <person name="Vamathevan J.J."/>
            <person name="Khouri H."/>
            <person name="Utterback T.R."/>
            <person name="Lee C."/>
            <person name="Dimitrov G."/>
            <person name="Jiang L."/>
            <person name="Qin H."/>
            <person name="Weidman J."/>
            <person name="Tran K."/>
            <person name="Kang K.H."/>
            <person name="Hance I.R."/>
            <person name="Nelson K.E."/>
            <person name="Fraser C.M."/>
        </authorList>
    </citation>
    <scope>NUCLEOTIDE SEQUENCE [LARGE SCALE GENOMIC DNA]</scope>
    <source>
        <strain>COL</strain>
    </source>
</reference>
<evidence type="ECO:0000250" key="1">
    <source>
        <dbReference type="UniProtKB" id="P08200"/>
    </source>
</evidence>
<evidence type="ECO:0000305" key="2"/>
<proteinExistence type="inferred from homology"/>
<accession>Q5HF79</accession>
<protein>
    <recommendedName>
        <fullName>Isocitrate dehydrogenase [NADP]</fullName>
        <shortName>IDH</shortName>
        <ecNumber evidence="1">1.1.1.42</ecNumber>
    </recommendedName>
    <alternativeName>
        <fullName>IDP</fullName>
    </alternativeName>
    <alternativeName>
        <fullName>NADP(+)-specific ICDH</fullName>
    </alternativeName>
    <alternativeName>
        <fullName>Oxalosuccinate decarboxylase</fullName>
    </alternativeName>
</protein>
<organism>
    <name type="scientific">Staphylococcus aureus (strain COL)</name>
    <dbReference type="NCBI Taxonomy" id="93062"/>
    <lineage>
        <taxon>Bacteria</taxon>
        <taxon>Bacillati</taxon>
        <taxon>Bacillota</taxon>
        <taxon>Bacilli</taxon>
        <taxon>Bacillales</taxon>
        <taxon>Staphylococcaceae</taxon>
        <taxon>Staphylococcus</taxon>
    </lineage>
</organism>
<dbReference type="EC" id="1.1.1.42" evidence="1"/>
<dbReference type="EMBL" id="CP000046">
    <property type="protein sequence ID" value="AAW36845.1"/>
    <property type="molecule type" value="Genomic_DNA"/>
</dbReference>
<dbReference type="RefSeq" id="WP_000123165.1">
    <property type="nucleotide sequence ID" value="NZ_JBGOFO010000003.1"/>
</dbReference>
<dbReference type="SMR" id="Q5HF79"/>
<dbReference type="KEGG" id="sac:SACOL1741"/>
<dbReference type="HOGENOM" id="CLU_031953_7_1_9"/>
<dbReference type="Proteomes" id="UP000000530">
    <property type="component" value="Chromosome"/>
</dbReference>
<dbReference type="GO" id="GO:0004450">
    <property type="term" value="F:isocitrate dehydrogenase (NADP+) activity"/>
    <property type="evidence" value="ECO:0007669"/>
    <property type="project" value="UniProtKB-EC"/>
</dbReference>
<dbReference type="GO" id="GO:0000287">
    <property type="term" value="F:magnesium ion binding"/>
    <property type="evidence" value="ECO:0007669"/>
    <property type="project" value="InterPro"/>
</dbReference>
<dbReference type="GO" id="GO:0051287">
    <property type="term" value="F:NAD binding"/>
    <property type="evidence" value="ECO:0007669"/>
    <property type="project" value="InterPro"/>
</dbReference>
<dbReference type="GO" id="GO:0006097">
    <property type="term" value="P:glyoxylate cycle"/>
    <property type="evidence" value="ECO:0007669"/>
    <property type="project" value="UniProtKB-KW"/>
</dbReference>
<dbReference type="GO" id="GO:0006099">
    <property type="term" value="P:tricarboxylic acid cycle"/>
    <property type="evidence" value="ECO:0007669"/>
    <property type="project" value="UniProtKB-KW"/>
</dbReference>
<dbReference type="Gene3D" id="3.40.718.10">
    <property type="entry name" value="Isopropylmalate Dehydrogenase"/>
    <property type="match status" value="1"/>
</dbReference>
<dbReference type="InterPro" id="IPR019818">
    <property type="entry name" value="IsoCit/isopropylmalate_DH_CS"/>
</dbReference>
<dbReference type="InterPro" id="IPR004439">
    <property type="entry name" value="Isocitrate_DH_NADP_dimer_prok"/>
</dbReference>
<dbReference type="InterPro" id="IPR024084">
    <property type="entry name" value="IsoPropMal-DH-like_dom"/>
</dbReference>
<dbReference type="NCBIfam" id="NF005425">
    <property type="entry name" value="PRK07006.1"/>
    <property type="match status" value="1"/>
</dbReference>
<dbReference type="NCBIfam" id="TIGR00183">
    <property type="entry name" value="prok_nadp_idh"/>
    <property type="match status" value="1"/>
</dbReference>
<dbReference type="PANTHER" id="PTHR43504">
    <property type="entry name" value="ISOCITRATE DEHYDROGENASE [NADP]"/>
    <property type="match status" value="1"/>
</dbReference>
<dbReference type="PANTHER" id="PTHR43504:SF1">
    <property type="entry name" value="ISOCITRATE DEHYDROGENASE [NADP]"/>
    <property type="match status" value="1"/>
</dbReference>
<dbReference type="Pfam" id="PF00180">
    <property type="entry name" value="Iso_dh"/>
    <property type="match status" value="1"/>
</dbReference>
<dbReference type="SMART" id="SM01329">
    <property type="entry name" value="Iso_dh"/>
    <property type="match status" value="1"/>
</dbReference>
<dbReference type="SUPFAM" id="SSF53659">
    <property type="entry name" value="Isocitrate/Isopropylmalate dehydrogenase-like"/>
    <property type="match status" value="1"/>
</dbReference>
<dbReference type="PROSITE" id="PS00470">
    <property type="entry name" value="IDH_IMDH"/>
    <property type="match status" value="1"/>
</dbReference>
<keyword id="KW-0329">Glyoxylate bypass</keyword>
<keyword id="KW-0460">Magnesium</keyword>
<keyword id="KW-0464">Manganese</keyword>
<keyword id="KW-0479">Metal-binding</keyword>
<keyword id="KW-0521">NADP</keyword>
<keyword id="KW-0560">Oxidoreductase</keyword>
<keyword id="KW-0816">Tricarboxylic acid cycle</keyword>
<feature type="chain" id="PRO_0000083559" description="Isocitrate dehydrogenase [NADP]">
    <location>
        <begin position="1"/>
        <end position="422"/>
    </location>
</feature>
<feature type="binding site" evidence="1">
    <location>
        <position position="94"/>
    </location>
    <ligand>
        <name>NADP(+)</name>
        <dbReference type="ChEBI" id="CHEBI:58349"/>
    </ligand>
</feature>
<feature type="binding site" evidence="1">
    <location>
        <position position="103"/>
    </location>
    <ligand>
        <name>D-threo-isocitrate</name>
        <dbReference type="ChEBI" id="CHEBI:15562"/>
    </ligand>
</feature>
<feature type="binding site" evidence="1">
    <location>
        <position position="105"/>
    </location>
    <ligand>
        <name>D-threo-isocitrate</name>
        <dbReference type="ChEBI" id="CHEBI:15562"/>
    </ligand>
</feature>
<feature type="binding site" evidence="1">
    <location>
        <position position="109"/>
    </location>
    <ligand>
        <name>D-threo-isocitrate</name>
        <dbReference type="ChEBI" id="CHEBI:15562"/>
    </ligand>
</feature>
<feature type="binding site" evidence="1">
    <location>
        <position position="119"/>
    </location>
    <ligand>
        <name>D-threo-isocitrate</name>
        <dbReference type="ChEBI" id="CHEBI:15562"/>
    </ligand>
</feature>
<feature type="binding site" evidence="1">
    <location>
        <position position="143"/>
    </location>
    <ligand>
        <name>D-threo-isocitrate</name>
        <dbReference type="ChEBI" id="CHEBI:15562"/>
    </ligand>
</feature>
<feature type="binding site" evidence="1">
    <location>
        <position position="310"/>
    </location>
    <ligand>
        <name>Mg(2+)</name>
        <dbReference type="ChEBI" id="CHEBI:18420"/>
    </ligand>
</feature>
<feature type="binding site" evidence="1">
    <location>
        <begin position="344"/>
        <end position="350"/>
    </location>
    <ligand>
        <name>NADP(+)</name>
        <dbReference type="ChEBI" id="CHEBI:58349"/>
    </ligand>
</feature>
<feature type="binding site" evidence="1">
    <location>
        <position position="357"/>
    </location>
    <ligand>
        <name>NADP(+)</name>
        <dbReference type="ChEBI" id="CHEBI:58349"/>
    </ligand>
</feature>
<feature type="binding site" evidence="1">
    <location>
        <position position="396"/>
    </location>
    <ligand>
        <name>NADP(+)</name>
        <dbReference type="ChEBI" id="CHEBI:58349"/>
    </ligand>
</feature>
<feature type="binding site" evidence="1">
    <location>
        <position position="400"/>
    </location>
    <ligand>
        <name>NADP(+)</name>
        <dbReference type="ChEBI" id="CHEBI:58349"/>
    </ligand>
</feature>
<feature type="site" description="Critical for catalysis" evidence="1">
    <location>
        <position position="150"/>
    </location>
</feature>
<feature type="site" description="Critical for catalysis" evidence="1">
    <location>
        <position position="220"/>
    </location>
</feature>
<gene>
    <name type="primary">icd</name>
    <name type="synonym">citC</name>
    <name type="ordered locus">SACOL1741</name>
</gene>
<name>IDH_STAAC</name>
<sequence length="422" mass="46423">MTAEKITQGTEGLNVPNEPIIPFIIGDGIGPDIWKAASRVIDAAVEKAYNGEKRIEWKEVLAGQKAFDTTGEWLPQETLDTIKEYLIAVKGPLTTPIGGGIRSLNVALRQELDLFTCLRPVRWFKGVPSPVKRPQDVDMVIFRENTEDIYAGIEFKEGTTEVKKVIDFLQNEMGATNIRFPETSGIGIKPVSKEGTERLVRAAIQYAIDNNRKSVTLVHKGNIMKFTEGSFKQWGYDLALSEFGDQVFTWQQYDEIVENEGRDAANAAQEKAEKEGKIIIKDSIADIFLQQILTRPAEHDVVATMNLNGDYISDALAAQVGGIGIAPGANINYETGHAIFEATHGTAPKYAGLNKVNPSSVILSSVLMLEHLGWQEAADKITDSIEDTIASKVVTYDFARLMDGAEEVSTSAFADELIKNLK</sequence>
<comment type="function">
    <text evidence="1">Catalyzes the oxidative decarboxylation of isocitrate to 2-oxoglutarate and carbon dioxide with the concomitant reduction of NADP(+).</text>
</comment>
<comment type="catalytic activity">
    <reaction evidence="1">
        <text>D-threo-isocitrate + NADP(+) = 2-oxoglutarate + CO2 + NADPH</text>
        <dbReference type="Rhea" id="RHEA:19629"/>
        <dbReference type="ChEBI" id="CHEBI:15562"/>
        <dbReference type="ChEBI" id="CHEBI:16526"/>
        <dbReference type="ChEBI" id="CHEBI:16810"/>
        <dbReference type="ChEBI" id="CHEBI:57783"/>
        <dbReference type="ChEBI" id="CHEBI:58349"/>
        <dbReference type="EC" id="1.1.1.42"/>
    </reaction>
</comment>
<comment type="cofactor">
    <cofactor evidence="1">
        <name>Mg(2+)</name>
        <dbReference type="ChEBI" id="CHEBI:18420"/>
    </cofactor>
    <cofactor evidence="1">
        <name>Mn(2+)</name>
        <dbReference type="ChEBI" id="CHEBI:29035"/>
    </cofactor>
    <text evidence="1">Binds 1 Mg(2+) or Mn(2+) ion per subunit.</text>
</comment>
<comment type="subunit">
    <text evidence="1">Homodimer.</text>
</comment>
<comment type="similarity">
    <text evidence="2">Belongs to the isocitrate and isopropylmalate dehydrogenases family.</text>
</comment>